<name>ASSY_HELHP</name>
<keyword id="KW-0028">Amino-acid biosynthesis</keyword>
<keyword id="KW-0055">Arginine biosynthesis</keyword>
<keyword id="KW-0067">ATP-binding</keyword>
<keyword id="KW-0963">Cytoplasm</keyword>
<keyword id="KW-0436">Ligase</keyword>
<keyword id="KW-0547">Nucleotide-binding</keyword>
<keyword id="KW-1185">Reference proteome</keyword>
<feature type="chain" id="PRO_0000148597" description="Argininosuccinate synthase">
    <location>
        <begin position="1"/>
        <end position="404"/>
    </location>
</feature>
<feature type="binding site" evidence="1">
    <location>
        <begin position="10"/>
        <end position="18"/>
    </location>
    <ligand>
        <name>ATP</name>
        <dbReference type="ChEBI" id="CHEBI:30616"/>
    </ligand>
</feature>
<feature type="binding site" evidence="1">
    <location>
        <position position="37"/>
    </location>
    <ligand>
        <name>ATP</name>
        <dbReference type="ChEBI" id="CHEBI:30616"/>
    </ligand>
</feature>
<feature type="binding site" evidence="1">
    <location>
        <position position="90"/>
    </location>
    <ligand>
        <name>L-citrulline</name>
        <dbReference type="ChEBI" id="CHEBI:57743"/>
    </ligand>
</feature>
<feature type="binding site" evidence="1">
    <location>
        <position position="95"/>
    </location>
    <ligand>
        <name>L-citrulline</name>
        <dbReference type="ChEBI" id="CHEBI:57743"/>
    </ligand>
</feature>
<feature type="binding site" evidence="1">
    <location>
        <position position="120"/>
    </location>
    <ligand>
        <name>ATP</name>
        <dbReference type="ChEBI" id="CHEBI:30616"/>
    </ligand>
</feature>
<feature type="binding site" evidence="1">
    <location>
        <position position="122"/>
    </location>
    <ligand>
        <name>L-aspartate</name>
        <dbReference type="ChEBI" id="CHEBI:29991"/>
    </ligand>
</feature>
<feature type="binding site" evidence="1">
    <location>
        <position position="126"/>
    </location>
    <ligand>
        <name>L-aspartate</name>
        <dbReference type="ChEBI" id="CHEBI:29991"/>
    </ligand>
</feature>
<feature type="binding site" evidence="1">
    <location>
        <position position="126"/>
    </location>
    <ligand>
        <name>L-citrulline</name>
        <dbReference type="ChEBI" id="CHEBI:57743"/>
    </ligand>
</feature>
<feature type="binding site" evidence="1">
    <location>
        <position position="127"/>
    </location>
    <ligand>
        <name>L-aspartate</name>
        <dbReference type="ChEBI" id="CHEBI:29991"/>
    </ligand>
</feature>
<feature type="binding site" evidence="1">
    <location>
        <position position="130"/>
    </location>
    <ligand>
        <name>L-citrulline</name>
        <dbReference type="ChEBI" id="CHEBI:57743"/>
    </ligand>
</feature>
<feature type="binding site" evidence="1">
    <location>
        <position position="180"/>
    </location>
    <ligand>
        <name>L-citrulline</name>
        <dbReference type="ChEBI" id="CHEBI:57743"/>
    </ligand>
</feature>
<feature type="binding site" evidence="1">
    <location>
        <position position="189"/>
    </location>
    <ligand>
        <name>L-citrulline</name>
        <dbReference type="ChEBI" id="CHEBI:57743"/>
    </ligand>
</feature>
<feature type="binding site" evidence="1">
    <location>
        <position position="265"/>
    </location>
    <ligand>
        <name>L-citrulline</name>
        <dbReference type="ChEBI" id="CHEBI:57743"/>
    </ligand>
</feature>
<feature type="binding site" evidence="1">
    <location>
        <position position="277"/>
    </location>
    <ligand>
        <name>L-citrulline</name>
        <dbReference type="ChEBI" id="CHEBI:57743"/>
    </ligand>
</feature>
<gene>
    <name evidence="1" type="primary">argG</name>
    <name type="ordered locus">HH_1221</name>
</gene>
<dbReference type="EC" id="6.3.4.5" evidence="1"/>
<dbReference type="EMBL" id="AE017125">
    <property type="protein sequence ID" value="AAP77818.1"/>
    <property type="molecule type" value="Genomic_DNA"/>
</dbReference>
<dbReference type="SMR" id="Q7VGU9"/>
<dbReference type="STRING" id="235279.HH_1221"/>
<dbReference type="KEGG" id="hhe:HH_1221"/>
<dbReference type="eggNOG" id="COG0137">
    <property type="taxonomic scope" value="Bacteria"/>
</dbReference>
<dbReference type="HOGENOM" id="CLU_032784_4_2_7"/>
<dbReference type="OrthoDB" id="9801641at2"/>
<dbReference type="UniPathway" id="UPA00068">
    <property type="reaction ID" value="UER00113"/>
</dbReference>
<dbReference type="Proteomes" id="UP000002495">
    <property type="component" value="Chromosome"/>
</dbReference>
<dbReference type="GO" id="GO:0005737">
    <property type="term" value="C:cytoplasm"/>
    <property type="evidence" value="ECO:0007669"/>
    <property type="project" value="UniProtKB-SubCell"/>
</dbReference>
<dbReference type="GO" id="GO:0004055">
    <property type="term" value="F:argininosuccinate synthase activity"/>
    <property type="evidence" value="ECO:0007669"/>
    <property type="project" value="UniProtKB-UniRule"/>
</dbReference>
<dbReference type="GO" id="GO:0005524">
    <property type="term" value="F:ATP binding"/>
    <property type="evidence" value="ECO:0007669"/>
    <property type="project" value="UniProtKB-UniRule"/>
</dbReference>
<dbReference type="GO" id="GO:0000053">
    <property type="term" value="P:argininosuccinate metabolic process"/>
    <property type="evidence" value="ECO:0007669"/>
    <property type="project" value="TreeGrafter"/>
</dbReference>
<dbReference type="GO" id="GO:0006526">
    <property type="term" value="P:L-arginine biosynthetic process"/>
    <property type="evidence" value="ECO:0007669"/>
    <property type="project" value="UniProtKB-UniRule"/>
</dbReference>
<dbReference type="GO" id="GO:0000050">
    <property type="term" value="P:urea cycle"/>
    <property type="evidence" value="ECO:0007669"/>
    <property type="project" value="TreeGrafter"/>
</dbReference>
<dbReference type="CDD" id="cd01999">
    <property type="entry name" value="ASS"/>
    <property type="match status" value="1"/>
</dbReference>
<dbReference type="FunFam" id="3.40.50.620:FF:000019">
    <property type="entry name" value="Argininosuccinate synthase"/>
    <property type="match status" value="1"/>
</dbReference>
<dbReference type="FunFam" id="3.90.1260.10:FF:000007">
    <property type="entry name" value="Argininosuccinate synthase"/>
    <property type="match status" value="1"/>
</dbReference>
<dbReference type="Gene3D" id="3.90.1260.10">
    <property type="entry name" value="Argininosuccinate synthetase, chain A, domain 2"/>
    <property type="match status" value="1"/>
</dbReference>
<dbReference type="Gene3D" id="3.40.50.620">
    <property type="entry name" value="HUPs"/>
    <property type="match status" value="1"/>
</dbReference>
<dbReference type="Gene3D" id="1.20.5.470">
    <property type="entry name" value="Single helix bin"/>
    <property type="match status" value="1"/>
</dbReference>
<dbReference type="HAMAP" id="MF_00005">
    <property type="entry name" value="Arg_succ_synth_type1"/>
    <property type="match status" value="1"/>
</dbReference>
<dbReference type="InterPro" id="IPR048268">
    <property type="entry name" value="Arginosuc_syn_C"/>
</dbReference>
<dbReference type="InterPro" id="IPR048267">
    <property type="entry name" value="Arginosuc_syn_N"/>
</dbReference>
<dbReference type="InterPro" id="IPR001518">
    <property type="entry name" value="Arginosuc_synth"/>
</dbReference>
<dbReference type="InterPro" id="IPR018223">
    <property type="entry name" value="Arginosuc_synth_CS"/>
</dbReference>
<dbReference type="InterPro" id="IPR023434">
    <property type="entry name" value="Arginosuc_synth_type_1_subfam"/>
</dbReference>
<dbReference type="InterPro" id="IPR024074">
    <property type="entry name" value="AS_cat/multimer_dom_body"/>
</dbReference>
<dbReference type="InterPro" id="IPR014729">
    <property type="entry name" value="Rossmann-like_a/b/a_fold"/>
</dbReference>
<dbReference type="NCBIfam" id="TIGR00032">
    <property type="entry name" value="argG"/>
    <property type="match status" value="1"/>
</dbReference>
<dbReference type="NCBIfam" id="NF001770">
    <property type="entry name" value="PRK00509.1"/>
    <property type="match status" value="1"/>
</dbReference>
<dbReference type="PANTHER" id="PTHR11587">
    <property type="entry name" value="ARGININOSUCCINATE SYNTHASE"/>
    <property type="match status" value="1"/>
</dbReference>
<dbReference type="PANTHER" id="PTHR11587:SF2">
    <property type="entry name" value="ARGININOSUCCINATE SYNTHASE"/>
    <property type="match status" value="1"/>
</dbReference>
<dbReference type="Pfam" id="PF20979">
    <property type="entry name" value="Arginosuc_syn_C"/>
    <property type="match status" value="1"/>
</dbReference>
<dbReference type="Pfam" id="PF00764">
    <property type="entry name" value="Arginosuc_synth"/>
    <property type="match status" value="1"/>
</dbReference>
<dbReference type="SUPFAM" id="SSF52402">
    <property type="entry name" value="Adenine nucleotide alpha hydrolases-like"/>
    <property type="match status" value="1"/>
</dbReference>
<dbReference type="SUPFAM" id="SSF69864">
    <property type="entry name" value="Argininosuccinate synthetase, C-terminal domain"/>
    <property type="match status" value="1"/>
</dbReference>
<dbReference type="PROSITE" id="PS00564">
    <property type="entry name" value="ARGININOSUCCIN_SYN_1"/>
    <property type="match status" value="1"/>
</dbReference>
<dbReference type="PROSITE" id="PS00565">
    <property type="entry name" value="ARGININOSUCCIN_SYN_2"/>
    <property type="match status" value="1"/>
</dbReference>
<organism>
    <name type="scientific">Helicobacter hepaticus (strain ATCC 51449 / 3B1)</name>
    <dbReference type="NCBI Taxonomy" id="235279"/>
    <lineage>
        <taxon>Bacteria</taxon>
        <taxon>Pseudomonadati</taxon>
        <taxon>Campylobacterota</taxon>
        <taxon>Epsilonproteobacteria</taxon>
        <taxon>Campylobacterales</taxon>
        <taxon>Helicobacteraceae</taxon>
        <taxon>Helicobacter</taxon>
    </lineage>
</organism>
<protein>
    <recommendedName>
        <fullName evidence="1">Argininosuccinate synthase</fullName>
        <ecNumber evidence="1">6.3.4.5</ecNumber>
    </recommendedName>
    <alternativeName>
        <fullName evidence="1">Citrulline--aspartate ligase</fullName>
    </alternativeName>
</protein>
<reference key="1">
    <citation type="journal article" date="2003" name="Proc. Natl. Acad. Sci. U.S.A.">
        <title>The complete genome sequence of the carcinogenic bacterium Helicobacter hepaticus.</title>
        <authorList>
            <person name="Suerbaum S."/>
            <person name="Josenhans C."/>
            <person name="Sterzenbach T."/>
            <person name="Drescher B."/>
            <person name="Brandt P."/>
            <person name="Bell M."/>
            <person name="Droege M."/>
            <person name="Fartmann B."/>
            <person name="Fischer H.-P."/>
            <person name="Ge Z."/>
            <person name="Hoerster A."/>
            <person name="Holland R."/>
            <person name="Klein K."/>
            <person name="Koenig J."/>
            <person name="Macko L."/>
            <person name="Mendz G.L."/>
            <person name="Nyakatura G."/>
            <person name="Schauer D.B."/>
            <person name="Shen Z."/>
            <person name="Weber J."/>
            <person name="Frosch M."/>
            <person name="Fox J.G."/>
        </authorList>
    </citation>
    <scope>NUCLEOTIDE SEQUENCE [LARGE SCALE GENOMIC DNA]</scope>
    <source>
        <strain>ATCC 51449 / 3B1</strain>
    </source>
</reference>
<accession>Q7VGU9</accession>
<comment type="catalytic activity">
    <reaction evidence="1">
        <text>L-citrulline + L-aspartate + ATP = 2-(N(omega)-L-arginino)succinate + AMP + diphosphate + H(+)</text>
        <dbReference type="Rhea" id="RHEA:10932"/>
        <dbReference type="ChEBI" id="CHEBI:15378"/>
        <dbReference type="ChEBI" id="CHEBI:29991"/>
        <dbReference type="ChEBI" id="CHEBI:30616"/>
        <dbReference type="ChEBI" id="CHEBI:33019"/>
        <dbReference type="ChEBI" id="CHEBI:57472"/>
        <dbReference type="ChEBI" id="CHEBI:57743"/>
        <dbReference type="ChEBI" id="CHEBI:456215"/>
        <dbReference type="EC" id="6.3.4.5"/>
    </reaction>
</comment>
<comment type="pathway">
    <text evidence="1">Amino-acid biosynthesis; L-arginine biosynthesis; L-arginine from L-ornithine and carbamoyl phosphate: step 2/3.</text>
</comment>
<comment type="subunit">
    <text evidence="1">Homotetramer.</text>
</comment>
<comment type="subcellular location">
    <subcellularLocation>
        <location evidence="1">Cytoplasm</location>
    </subcellularLocation>
</comment>
<comment type="similarity">
    <text evidence="1">Belongs to the argininosuccinate synthase family. Type 1 subfamily.</text>
</comment>
<proteinExistence type="inferred from homology"/>
<evidence type="ECO:0000255" key="1">
    <source>
        <dbReference type="HAMAP-Rule" id="MF_00005"/>
    </source>
</evidence>
<sequence length="404" mass="45160">MAAIKKVVLAYSGGLDTSVILKWLGDNYHCEVVTFTADIGQGEEVEPAREKALKLGIKSENIFIEDLREEFIKDFVFPMFRANTIYEGEYLLGTSIARPLIAKRLVEIAKSVGADAIAHGATGKGNDQVRFELGAYALNPDIKVIAPWREWDLNSREKLLAYAESAGIAIEKKQNKSPYSMDANLLHISYEGQILEDPNVEPEEDMWRWSVSPLNAPDKPESISIEFQNGDGVAINGEKLSPANFWVNLNELGGKHGIGRLDLVENRYVGMKSRGCYETPGGTIYLKAHRAIESLCLDREEAHLKDSIMPKYAELIYNGYWFSPEREALQALIDKTQQKVSGVVRLKLYKGNVIVIGRESKNSLFNAAYSTFEEDSVYNQKDAAGFIKLNALRFIIAGKANRDK</sequence>